<proteinExistence type="inferred from homology"/>
<keyword id="KW-0032">Aminotransferase</keyword>
<keyword id="KW-0808">Transferase</keyword>
<feature type="chain" id="PRO_1000119195" description="Aminomethyltransferase">
    <location>
        <begin position="1"/>
        <end position="366"/>
    </location>
</feature>
<gene>
    <name evidence="1" type="primary">gcvT</name>
    <name type="ordered locus">BCB4264_A4339</name>
</gene>
<evidence type="ECO:0000255" key="1">
    <source>
        <dbReference type="HAMAP-Rule" id="MF_00259"/>
    </source>
</evidence>
<name>GCST_BACC4</name>
<reference key="1">
    <citation type="submission" date="2008-10" db="EMBL/GenBank/DDBJ databases">
        <title>Genome sequence of Bacillus cereus B4264.</title>
        <authorList>
            <person name="Dodson R.J."/>
            <person name="Durkin A.S."/>
            <person name="Rosovitz M.J."/>
            <person name="Rasko D.A."/>
            <person name="Hoffmaster A."/>
            <person name="Ravel J."/>
            <person name="Sutton G."/>
        </authorList>
    </citation>
    <scope>NUCLEOTIDE SEQUENCE [LARGE SCALE GENOMIC DNA]</scope>
    <source>
        <strain>B4264</strain>
    </source>
</reference>
<protein>
    <recommendedName>
        <fullName evidence="1">Aminomethyltransferase</fullName>
        <ecNumber evidence="1">2.1.2.10</ecNumber>
    </recommendedName>
    <alternativeName>
        <fullName evidence="1">Glycine cleavage system T protein</fullName>
    </alternativeName>
</protein>
<organism>
    <name type="scientific">Bacillus cereus (strain B4264)</name>
    <dbReference type="NCBI Taxonomy" id="405532"/>
    <lineage>
        <taxon>Bacteria</taxon>
        <taxon>Bacillati</taxon>
        <taxon>Bacillota</taxon>
        <taxon>Bacilli</taxon>
        <taxon>Bacillales</taxon>
        <taxon>Bacillaceae</taxon>
        <taxon>Bacillus</taxon>
        <taxon>Bacillus cereus group</taxon>
    </lineage>
</organism>
<dbReference type="EC" id="2.1.2.10" evidence="1"/>
<dbReference type="EMBL" id="CP001176">
    <property type="protein sequence ID" value="ACK62772.1"/>
    <property type="molecule type" value="Genomic_DNA"/>
</dbReference>
<dbReference type="RefSeq" id="WP_000631764.1">
    <property type="nucleotide sequence ID" value="NC_011725.1"/>
</dbReference>
<dbReference type="SMR" id="B7HBA0"/>
<dbReference type="KEGG" id="bcb:BCB4264_A4339"/>
<dbReference type="HOGENOM" id="CLU_007884_10_2_9"/>
<dbReference type="Proteomes" id="UP000007096">
    <property type="component" value="Chromosome"/>
</dbReference>
<dbReference type="GO" id="GO:0005829">
    <property type="term" value="C:cytosol"/>
    <property type="evidence" value="ECO:0007669"/>
    <property type="project" value="TreeGrafter"/>
</dbReference>
<dbReference type="GO" id="GO:0005960">
    <property type="term" value="C:glycine cleavage complex"/>
    <property type="evidence" value="ECO:0007669"/>
    <property type="project" value="InterPro"/>
</dbReference>
<dbReference type="GO" id="GO:0004047">
    <property type="term" value="F:aminomethyltransferase activity"/>
    <property type="evidence" value="ECO:0007669"/>
    <property type="project" value="UniProtKB-UniRule"/>
</dbReference>
<dbReference type="GO" id="GO:0008483">
    <property type="term" value="F:transaminase activity"/>
    <property type="evidence" value="ECO:0007669"/>
    <property type="project" value="UniProtKB-KW"/>
</dbReference>
<dbReference type="GO" id="GO:0019464">
    <property type="term" value="P:glycine decarboxylation via glycine cleavage system"/>
    <property type="evidence" value="ECO:0007669"/>
    <property type="project" value="UniProtKB-UniRule"/>
</dbReference>
<dbReference type="FunFam" id="2.40.30.110:FF:000003">
    <property type="entry name" value="Aminomethyltransferase"/>
    <property type="match status" value="1"/>
</dbReference>
<dbReference type="FunFam" id="3.30.70.1400:FF:000001">
    <property type="entry name" value="Aminomethyltransferase"/>
    <property type="match status" value="1"/>
</dbReference>
<dbReference type="FunFam" id="4.10.1250.10:FF:000001">
    <property type="entry name" value="Aminomethyltransferase"/>
    <property type="match status" value="1"/>
</dbReference>
<dbReference type="Gene3D" id="2.40.30.110">
    <property type="entry name" value="Aminomethyltransferase beta-barrel domains"/>
    <property type="match status" value="1"/>
</dbReference>
<dbReference type="Gene3D" id="3.30.70.1400">
    <property type="entry name" value="Aminomethyltransferase beta-barrel domains"/>
    <property type="match status" value="1"/>
</dbReference>
<dbReference type="Gene3D" id="4.10.1250.10">
    <property type="entry name" value="Aminomethyltransferase fragment"/>
    <property type="match status" value="1"/>
</dbReference>
<dbReference type="Gene3D" id="3.30.1360.120">
    <property type="entry name" value="Probable tRNA modification gtpase trme, domain 1"/>
    <property type="match status" value="1"/>
</dbReference>
<dbReference type="HAMAP" id="MF_00259">
    <property type="entry name" value="GcvT"/>
    <property type="match status" value="1"/>
</dbReference>
<dbReference type="InterPro" id="IPR006223">
    <property type="entry name" value="GCS_T"/>
</dbReference>
<dbReference type="InterPro" id="IPR022903">
    <property type="entry name" value="GCS_T_bac"/>
</dbReference>
<dbReference type="InterPro" id="IPR013977">
    <property type="entry name" value="GCST_C"/>
</dbReference>
<dbReference type="InterPro" id="IPR006222">
    <property type="entry name" value="GCV_T_N"/>
</dbReference>
<dbReference type="InterPro" id="IPR028896">
    <property type="entry name" value="GcvT/YgfZ/DmdA"/>
</dbReference>
<dbReference type="InterPro" id="IPR029043">
    <property type="entry name" value="GcvT/YgfZ_C"/>
</dbReference>
<dbReference type="InterPro" id="IPR027266">
    <property type="entry name" value="TrmE/GcvT_dom1"/>
</dbReference>
<dbReference type="NCBIfam" id="TIGR00528">
    <property type="entry name" value="gcvT"/>
    <property type="match status" value="1"/>
</dbReference>
<dbReference type="NCBIfam" id="NF001567">
    <property type="entry name" value="PRK00389.1"/>
    <property type="match status" value="1"/>
</dbReference>
<dbReference type="PANTHER" id="PTHR43757">
    <property type="entry name" value="AMINOMETHYLTRANSFERASE"/>
    <property type="match status" value="1"/>
</dbReference>
<dbReference type="PANTHER" id="PTHR43757:SF2">
    <property type="entry name" value="AMINOMETHYLTRANSFERASE, MITOCHONDRIAL"/>
    <property type="match status" value="1"/>
</dbReference>
<dbReference type="Pfam" id="PF01571">
    <property type="entry name" value="GCV_T"/>
    <property type="match status" value="1"/>
</dbReference>
<dbReference type="Pfam" id="PF08669">
    <property type="entry name" value="GCV_T_C"/>
    <property type="match status" value="1"/>
</dbReference>
<dbReference type="PIRSF" id="PIRSF006487">
    <property type="entry name" value="GcvT"/>
    <property type="match status" value="1"/>
</dbReference>
<dbReference type="SUPFAM" id="SSF101790">
    <property type="entry name" value="Aminomethyltransferase beta-barrel domain"/>
    <property type="match status" value="1"/>
</dbReference>
<dbReference type="SUPFAM" id="SSF103025">
    <property type="entry name" value="Folate-binding domain"/>
    <property type="match status" value="1"/>
</dbReference>
<sequence length="366" mass="40239">MITLQRTPLFDVYAKYGGKTIDFGGWELPVQFSSIKEEHEAVRTAAGLFDVSHMGEVEVKGVDSLAFLQRVVTNDVSTLKVGGAQYTAMCYENGGTVDDLLIYKRGEEDYLLVINASNIEKDYEWLASHVIGDATVVNVSSEVAQLAIQGPKAEGILQKVVSEDLKEIKFFKFKKDILVDGIPALVSRTGYTGEDGFEIYCKSEDAAKLWEKLLEVGAEEGLKACGLGARDTLRFEATLPLYGQELSKDITPIEAGIGFAVKTNKEADFFGKATLKEQKENGAPRKLVGIEVIERGIPRTHYPVFIGEEKIGEVTSGTQSPTLKKSIGLALIDVKYAAVDTEVEIEIRNKRVKAVVVPTPFYKRSK</sequence>
<accession>B7HBA0</accession>
<comment type="function">
    <text evidence="1">The glycine cleavage system catalyzes the degradation of glycine.</text>
</comment>
<comment type="catalytic activity">
    <reaction evidence="1">
        <text>N(6)-[(R)-S(8)-aminomethyldihydrolipoyl]-L-lysyl-[protein] + (6S)-5,6,7,8-tetrahydrofolate = N(6)-[(R)-dihydrolipoyl]-L-lysyl-[protein] + (6R)-5,10-methylene-5,6,7,8-tetrahydrofolate + NH4(+)</text>
        <dbReference type="Rhea" id="RHEA:16945"/>
        <dbReference type="Rhea" id="RHEA-COMP:10475"/>
        <dbReference type="Rhea" id="RHEA-COMP:10492"/>
        <dbReference type="ChEBI" id="CHEBI:15636"/>
        <dbReference type="ChEBI" id="CHEBI:28938"/>
        <dbReference type="ChEBI" id="CHEBI:57453"/>
        <dbReference type="ChEBI" id="CHEBI:83100"/>
        <dbReference type="ChEBI" id="CHEBI:83143"/>
        <dbReference type="EC" id="2.1.2.10"/>
    </reaction>
</comment>
<comment type="subunit">
    <text evidence="1">The glycine cleavage system is composed of four proteins: P, T, L and H.</text>
</comment>
<comment type="similarity">
    <text evidence="1">Belongs to the GcvT family.</text>
</comment>